<evidence type="ECO:0000250" key="1">
    <source>
        <dbReference type="UniProtKB" id="Q96Q35"/>
    </source>
</evidence>
<evidence type="ECO:0000255" key="2"/>
<evidence type="ECO:0000256" key="3">
    <source>
        <dbReference type="SAM" id="MobiDB-lite"/>
    </source>
</evidence>
<evidence type="ECO:0000269" key="4">
    <source>
    </source>
</evidence>
<evidence type="ECO:0000303" key="5">
    <source>
    </source>
</evidence>
<evidence type="ECO:0000305" key="6"/>
<evidence type="ECO:0000312" key="7">
    <source>
        <dbReference type="EMBL" id="AK016678"/>
    </source>
</evidence>
<evidence type="ECO:0000312" key="8">
    <source>
        <dbReference type="EMBL" id="BAC36671.1"/>
    </source>
</evidence>
<evidence type="ECO:0000312" key="9">
    <source>
        <dbReference type="MGI" id="MGI:1918359"/>
    </source>
</evidence>
<accession>Q8BVM7</accession>
<dbReference type="EMBL" id="AK016678">
    <property type="status" value="NOT_ANNOTATED_CDS"/>
    <property type="molecule type" value="mRNA"/>
</dbReference>
<dbReference type="EMBL" id="AK077190">
    <property type="protein sequence ID" value="BAC36671.1"/>
    <property type="molecule type" value="mRNA"/>
</dbReference>
<dbReference type="CCDS" id="CCDS35581.1">
    <molecule id="Q8BVM7-1"/>
</dbReference>
<dbReference type="RefSeq" id="NP_780579.1">
    <molecule id="Q8BVM7-1"/>
    <property type="nucleotide sequence ID" value="NM_175370.5"/>
</dbReference>
<dbReference type="SMR" id="Q8BVM7"/>
<dbReference type="BioGRID" id="224431">
    <property type="interactions" value="1"/>
</dbReference>
<dbReference type="FunCoup" id="Q8BVM7">
    <property type="interactions" value="174"/>
</dbReference>
<dbReference type="STRING" id="10090.ENSMUSP00000139420"/>
<dbReference type="iPTMnet" id="Q8BVM7"/>
<dbReference type="PhosphoSitePlus" id="Q8BVM7"/>
<dbReference type="PaxDb" id="10090-ENSMUSP00000062497"/>
<dbReference type="ProteomicsDB" id="285807">
    <molecule id="Q8BVM7-1"/>
</dbReference>
<dbReference type="ProteomicsDB" id="285808">
    <molecule id="Q8BVM7-2"/>
</dbReference>
<dbReference type="Antibodypedia" id="34140">
    <property type="antibodies" value="81 antibodies from 19 providers"/>
</dbReference>
<dbReference type="DNASU" id="108812"/>
<dbReference type="Ensembl" id="ENSMUST00000055313.14">
    <molecule id="Q8BVM7-1"/>
    <property type="protein sequence ID" value="ENSMUSP00000062497.8"/>
    <property type="gene ID" value="ENSMUSG00000047528.14"/>
</dbReference>
<dbReference type="GeneID" id="108812"/>
<dbReference type="KEGG" id="mmu:108812"/>
<dbReference type="UCSC" id="uc007bcm.2">
    <molecule id="Q8BVM7-1"/>
    <property type="organism name" value="mouse"/>
</dbReference>
<dbReference type="AGR" id="MGI:1918359"/>
<dbReference type="CTD" id="130540"/>
<dbReference type="MGI" id="MGI:1918359">
    <property type="gene designation" value="Flacc1"/>
</dbReference>
<dbReference type="VEuPathDB" id="HostDB:ENSMUSG00000047528"/>
<dbReference type="eggNOG" id="ENOG502R2KT">
    <property type="taxonomic scope" value="Eukaryota"/>
</dbReference>
<dbReference type="GeneTree" id="ENSGT00400000022323"/>
<dbReference type="HOGENOM" id="CLU_049696_0_0_1"/>
<dbReference type="InParanoid" id="Q8BVM7"/>
<dbReference type="OrthoDB" id="10013155at2759"/>
<dbReference type="PhylomeDB" id="Q8BVM7"/>
<dbReference type="TreeFam" id="TF338239"/>
<dbReference type="BioGRID-ORCS" id="108812">
    <property type="hits" value="2 hits in 76 CRISPR screens"/>
</dbReference>
<dbReference type="ChiTaRS" id="Flacc1">
    <property type="organism name" value="mouse"/>
</dbReference>
<dbReference type="PRO" id="PR:Q8BVM7"/>
<dbReference type="Proteomes" id="UP000000589">
    <property type="component" value="Chromosome 1"/>
</dbReference>
<dbReference type="RNAct" id="Q8BVM7">
    <property type="molecule type" value="protein"/>
</dbReference>
<dbReference type="Bgee" id="ENSMUSG00000047528">
    <property type="expression patterns" value="Expressed in spermatocyte and 49 other cell types or tissues"/>
</dbReference>
<dbReference type="ExpressionAtlas" id="Q8BVM7">
    <property type="expression patterns" value="baseline and differential"/>
</dbReference>
<dbReference type="GO" id="GO:0005737">
    <property type="term" value="C:cytoplasm"/>
    <property type="evidence" value="ECO:0000314"/>
    <property type="project" value="UniProtKB"/>
</dbReference>
<dbReference type="GO" id="GO:0031410">
    <property type="term" value="C:cytoplasmic vesicle"/>
    <property type="evidence" value="ECO:0000314"/>
    <property type="project" value="UniProtKB"/>
</dbReference>
<dbReference type="GO" id="GO:0001520">
    <property type="term" value="C:outer dense fiber"/>
    <property type="evidence" value="ECO:0000314"/>
    <property type="project" value="MGI"/>
</dbReference>
<dbReference type="GO" id="GO:0035686">
    <property type="term" value="C:sperm fibrous sheath"/>
    <property type="evidence" value="ECO:0000314"/>
    <property type="project" value="MGI"/>
</dbReference>
<dbReference type="GO" id="GO:0036126">
    <property type="term" value="C:sperm flagellum"/>
    <property type="evidence" value="ECO:0000314"/>
    <property type="project" value="UniProtKB"/>
</dbReference>
<dbReference type="InterPro" id="IPR026674">
    <property type="entry name" value="FLACC1"/>
</dbReference>
<dbReference type="PANTHER" id="PTHR21707">
    <property type="entry name" value="FLAGELLUM-ASSOCIATED COILED-COIL DOMAIN-CONTAINING PROTEIN 1"/>
    <property type="match status" value="1"/>
</dbReference>
<dbReference type="PANTHER" id="PTHR21707:SF42">
    <property type="entry name" value="FLAGELLUM-ASSOCIATED COILED-COIL DOMAIN-CONTAINING PROTEIN 1"/>
    <property type="match status" value="1"/>
</dbReference>
<keyword id="KW-0007">Acetylation</keyword>
<keyword id="KW-0025">Alternative splicing</keyword>
<keyword id="KW-0966">Cell projection</keyword>
<keyword id="KW-0969">Cilium</keyword>
<keyword id="KW-0175">Coiled coil</keyword>
<keyword id="KW-0963">Cytoplasm</keyword>
<keyword id="KW-0282">Flagellum</keyword>
<keyword id="KW-1185">Reference proteome</keyword>
<protein>
    <recommendedName>
        <fullName evidence="1">Flagellum-associated coiled-coil domain-containing protein 1</fullName>
    </recommendedName>
    <alternativeName>
        <fullName>Amyotrophic lateral sclerosis 2 chromosomal region candidate gene 12 protein homolog</fullName>
    </alternativeName>
</protein>
<feature type="chain" id="PRO_0000344494" description="Flagellum-associated coiled-coil domain-containing protein 1">
    <location>
        <begin position="1"/>
        <end position="383"/>
    </location>
</feature>
<feature type="region of interest" description="Disordered" evidence="3">
    <location>
        <begin position="26"/>
        <end position="79"/>
    </location>
</feature>
<feature type="coiled-coil region" evidence="2">
    <location>
        <begin position="125"/>
        <end position="220"/>
    </location>
</feature>
<feature type="coiled-coil region" evidence="2">
    <location>
        <begin position="276"/>
        <end position="359"/>
    </location>
</feature>
<feature type="compositionally biased region" description="Polar residues" evidence="3">
    <location>
        <begin position="51"/>
        <end position="77"/>
    </location>
</feature>
<feature type="modified residue" description="N6-acetyllysine" evidence="1">
    <location>
        <position position="354"/>
    </location>
</feature>
<feature type="splice variant" id="VSP_058875" description="In isoform 2.">
    <original>DKMSKEYKYLKSMFHVFQDSIYEEMEDKWLRRKAEWE</original>
    <variation>GTVGPWGDAGRKVDSLPWHPYSHGLAQPDVQHFPSEA</variation>
    <location>
        <begin position="209"/>
        <end position="245"/>
    </location>
</feature>
<feature type="splice variant" id="VSP_058876" description="In isoform 2.">
    <location>
        <begin position="246"/>
        <end position="383"/>
    </location>
</feature>
<reference key="1">
    <citation type="journal article" date="2005" name="Science">
        <title>The transcriptional landscape of the mammalian genome.</title>
        <authorList>
            <person name="Carninci P."/>
            <person name="Kasukawa T."/>
            <person name="Katayama S."/>
            <person name="Gough J."/>
            <person name="Frith M.C."/>
            <person name="Maeda N."/>
            <person name="Oyama R."/>
            <person name="Ravasi T."/>
            <person name="Lenhard B."/>
            <person name="Wells C."/>
            <person name="Kodzius R."/>
            <person name="Shimokawa K."/>
            <person name="Bajic V.B."/>
            <person name="Brenner S.E."/>
            <person name="Batalov S."/>
            <person name="Forrest A.R."/>
            <person name="Zavolan M."/>
            <person name="Davis M.J."/>
            <person name="Wilming L.G."/>
            <person name="Aidinis V."/>
            <person name="Allen J.E."/>
            <person name="Ambesi-Impiombato A."/>
            <person name="Apweiler R."/>
            <person name="Aturaliya R.N."/>
            <person name="Bailey T.L."/>
            <person name="Bansal M."/>
            <person name="Baxter L."/>
            <person name="Beisel K.W."/>
            <person name="Bersano T."/>
            <person name="Bono H."/>
            <person name="Chalk A.M."/>
            <person name="Chiu K.P."/>
            <person name="Choudhary V."/>
            <person name="Christoffels A."/>
            <person name="Clutterbuck D.R."/>
            <person name="Crowe M.L."/>
            <person name="Dalla E."/>
            <person name="Dalrymple B.P."/>
            <person name="de Bono B."/>
            <person name="Della Gatta G."/>
            <person name="di Bernardo D."/>
            <person name="Down T."/>
            <person name="Engstrom P."/>
            <person name="Fagiolini M."/>
            <person name="Faulkner G."/>
            <person name="Fletcher C.F."/>
            <person name="Fukushima T."/>
            <person name="Furuno M."/>
            <person name="Futaki S."/>
            <person name="Gariboldi M."/>
            <person name="Georgii-Hemming P."/>
            <person name="Gingeras T.R."/>
            <person name="Gojobori T."/>
            <person name="Green R.E."/>
            <person name="Gustincich S."/>
            <person name="Harbers M."/>
            <person name="Hayashi Y."/>
            <person name="Hensch T.K."/>
            <person name="Hirokawa N."/>
            <person name="Hill D."/>
            <person name="Huminiecki L."/>
            <person name="Iacono M."/>
            <person name="Ikeo K."/>
            <person name="Iwama A."/>
            <person name="Ishikawa T."/>
            <person name="Jakt M."/>
            <person name="Kanapin A."/>
            <person name="Katoh M."/>
            <person name="Kawasawa Y."/>
            <person name="Kelso J."/>
            <person name="Kitamura H."/>
            <person name="Kitano H."/>
            <person name="Kollias G."/>
            <person name="Krishnan S.P."/>
            <person name="Kruger A."/>
            <person name="Kummerfeld S.K."/>
            <person name="Kurochkin I.V."/>
            <person name="Lareau L.F."/>
            <person name="Lazarevic D."/>
            <person name="Lipovich L."/>
            <person name="Liu J."/>
            <person name="Liuni S."/>
            <person name="McWilliam S."/>
            <person name="Madan Babu M."/>
            <person name="Madera M."/>
            <person name="Marchionni L."/>
            <person name="Matsuda H."/>
            <person name="Matsuzawa S."/>
            <person name="Miki H."/>
            <person name="Mignone F."/>
            <person name="Miyake S."/>
            <person name="Morris K."/>
            <person name="Mottagui-Tabar S."/>
            <person name="Mulder N."/>
            <person name="Nakano N."/>
            <person name="Nakauchi H."/>
            <person name="Ng P."/>
            <person name="Nilsson R."/>
            <person name="Nishiguchi S."/>
            <person name="Nishikawa S."/>
            <person name="Nori F."/>
            <person name="Ohara O."/>
            <person name="Okazaki Y."/>
            <person name="Orlando V."/>
            <person name="Pang K.C."/>
            <person name="Pavan W.J."/>
            <person name="Pavesi G."/>
            <person name="Pesole G."/>
            <person name="Petrovsky N."/>
            <person name="Piazza S."/>
            <person name="Reed J."/>
            <person name="Reid J.F."/>
            <person name="Ring B.Z."/>
            <person name="Ringwald M."/>
            <person name="Rost B."/>
            <person name="Ruan Y."/>
            <person name="Salzberg S.L."/>
            <person name="Sandelin A."/>
            <person name="Schneider C."/>
            <person name="Schoenbach C."/>
            <person name="Sekiguchi K."/>
            <person name="Semple C.A."/>
            <person name="Seno S."/>
            <person name="Sessa L."/>
            <person name="Sheng Y."/>
            <person name="Shibata Y."/>
            <person name="Shimada H."/>
            <person name="Shimada K."/>
            <person name="Silva D."/>
            <person name="Sinclair B."/>
            <person name="Sperling S."/>
            <person name="Stupka E."/>
            <person name="Sugiura K."/>
            <person name="Sultana R."/>
            <person name="Takenaka Y."/>
            <person name="Taki K."/>
            <person name="Tammoja K."/>
            <person name="Tan S.L."/>
            <person name="Tang S."/>
            <person name="Taylor M.S."/>
            <person name="Tegner J."/>
            <person name="Teichmann S.A."/>
            <person name="Ueda H.R."/>
            <person name="van Nimwegen E."/>
            <person name="Verardo R."/>
            <person name="Wei C.L."/>
            <person name="Yagi K."/>
            <person name="Yamanishi H."/>
            <person name="Zabarovsky E."/>
            <person name="Zhu S."/>
            <person name="Zimmer A."/>
            <person name="Hide W."/>
            <person name="Bult C."/>
            <person name="Grimmond S.M."/>
            <person name="Teasdale R.D."/>
            <person name="Liu E.T."/>
            <person name="Brusic V."/>
            <person name="Quackenbush J."/>
            <person name="Wahlestedt C."/>
            <person name="Mattick J.S."/>
            <person name="Hume D.A."/>
            <person name="Kai C."/>
            <person name="Sasaki D."/>
            <person name="Tomaru Y."/>
            <person name="Fukuda S."/>
            <person name="Kanamori-Katayama M."/>
            <person name="Suzuki M."/>
            <person name="Aoki J."/>
            <person name="Arakawa T."/>
            <person name="Iida J."/>
            <person name="Imamura K."/>
            <person name="Itoh M."/>
            <person name="Kato T."/>
            <person name="Kawaji H."/>
            <person name="Kawagashira N."/>
            <person name="Kawashima T."/>
            <person name="Kojima M."/>
            <person name="Kondo S."/>
            <person name="Konno H."/>
            <person name="Nakano K."/>
            <person name="Ninomiya N."/>
            <person name="Nishio T."/>
            <person name="Okada M."/>
            <person name="Plessy C."/>
            <person name="Shibata K."/>
            <person name="Shiraki T."/>
            <person name="Suzuki S."/>
            <person name="Tagami M."/>
            <person name="Waki K."/>
            <person name="Watahiki A."/>
            <person name="Okamura-Oho Y."/>
            <person name="Suzuki H."/>
            <person name="Kawai J."/>
            <person name="Hayashizaki Y."/>
        </authorList>
    </citation>
    <scope>NUCLEOTIDE SEQUENCE [LARGE SCALE MRNA]</scope>
    <source>
        <strain evidence="8">C57BL/6J</strain>
        <tissue evidence="7 8">Testis</tissue>
    </source>
</reference>
<reference key="2">
    <citation type="journal article" date="2011" name="Gene Expr. Patterns">
        <title>Expression of a sperm flagellum component encoded by the Als2cr12 gene.</title>
        <authorList>
            <person name="Choi E."/>
            <person name="Cho C."/>
        </authorList>
    </citation>
    <scope>IDENTIFICATION (ISOFORMS 1 AND 2)</scope>
    <scope>SUBCELLULAR LOCATION</scope>
    <scope>TISSUE SPECIFICITY</scope>
</reference>
<organism>
    <name type="scientific">Mus musculus</name>
    <name type="common">Mouse</name>
    <dbReference type="NCBI Taxonomy" id="10090"/>
    <lineage>
        <taxon>Eukaryota</taxon>
        <taxon>Metazoa</taxon>
        <taxon>Chordata</taxon>
        <taxon>Craniata</taxon>
        <taxon>Vertebrata</taxon>
        <taxon>Euteleostomi</taxon>
        <taxon>Mammalia</taxon>
        <taxon>Eutheria</taxon>
        <taxon>Euarchontoglires</taxon>
        <taxon>Glires</taxon>
        <taxon>Rodentia</taxon>
        <taxon>Myomorpha</taxon>
        <taxon>Muroidea</taxon>
        <taxon>Muridae</taxon>
        <taxon>Murinae</taxon>
        <taxon>Mus</taxon>
        <taxon>Mus</taxon>
    </lineage>
</organism>
<sequence length="383" mass="44916">MDPNPFIYCTCCDCCKLGQPKLIKTPYPLPKHPTGKFKPVLPPPISKEHNSLLSQPGKSTVSPRDKVQSGNTESSKAPSEVIQVSPGYTLIRNREQISVTLGDEMFNRKKHLESDVLSKVKFSRTDIISDLQEQIAELMAIIEQMNRDQQSALKLLSKDLDLRCSNMKQKFETESRELKETHREELERLENNYKEALKAEKALAEEKLDKMSKEYKYLKSMFHVFQDSIYEEMEDKWLRRKAEWEKDEKMEREKILLQQKCRIIKKFELQSEEKKKKMNESISAVSDNFAREKEELLRQHDEDILQIQELRKSKEILEAELRAQATVLETLNTNLFQCQKELERQKTIAANLEKLFQTKLAEAEEKHKYNIKTPTEENNCLRC</sequence>
<comment type="subcellular location">
    <molecule>Isoform 1</molecule>
    <subcellularLocation>
        <location evidence="4">Cytoplasm</location>
    </subcellularLocation>
    <subcellularLocation>
        <location evidence="4">Cytoplasmic granule</location>
    </subcellularLocation>
    <subcellularLocation>
        <location evidence="4">Cell projection</location>
        <location evidence="4">Cilium</location>
        <location evidence="4">Flagellum</location>
    </subcellularLocation>
    <text evidence="4">Expressed in the principal piece of the sperm tail, nearest the sperm head.</text>
</comment>
<comment type="subcellular location">
    <molecule>Isoform 2</molecule>
    <subcellularLocation>
        <location evidence="4">Cytoplasm</location>
    </subcellularLocation>
    <subcellularLocation>
        <location evidence="4">Cytoplasmic granule</location>
    </subcellularLocation>
</comment>
<comment type="alternative products">
    <event type="alternative splicing"/>
    <isoform>
        <id>Q8BVM7-1</id>
        <name>1</name>
        <name evidence="5">L</name>
        <sequence type="displayed"/>
    </isoform>
    <isoform>
        <id>Q8BVM7-2</id>
        <name>2</name>
        <name evidence="5">S</name>
        <sequence type="described" ref="VSP_058875 VSP_058876"/>
    </isoform>
</comment>
<comment type="tissue specificity">
    <text evidence="4">Isoform 1 is specific to germ cells of the testis and localizes to the principal piece of the sperm flagellum. Isoform 2 seems to be expressed mainly in somatic cells of the testis, and is not detected in mature spermatozoa (at protein level). Isoform 2 may also be expressed weakly in brain.</text>
</comment>
<comment type="miscellaneous">
    <molecule>Isoform 2</molecule>
    <text evidence="6">May be due to intron retention.</text>
</comment>
<proteinExistence type="evidence at protein level"/>
<name>FACC1_MOUSE</name>
<gene>
    <name evidence="1" type="primary">Flacc1</name>
    <name evidence="9" type="synonym">Als2cr12</name>
</gene>